<proteinExistence type="inferred from homology"/>
<feature type="chain" id="PRO_0000222069" description="Aphid transmission protein">
    <location>
        <begin position="1"/>
        <end position="159"/>
    </location>
</feature>
<evidence type="ECO:0000305" key="1"/>
<gene>
    <name type="ORF">ORF II</name>
</gene>
<comment type="function">
    <text>This protein is involved in virus transmission.</text>
</comment>
<comment type="similarity">
    <text evidence="1">Belongs to the caulimoviridae ORF II family.</text>
</comment>
<protein>
    <recommendedName>
        <fullName>Aphid transmission protein</fullName>
    </recommendedName>
    <alternativeName>
        <fullName>Atf</fullName>
    </alternativeName>
    <alternativeName>
        <fullName>Protein 2</fullName>
    </alternativeName>
</protein>
<organism>
    <name type="scientific">Cauliflower mosaic virus (strain BBC)</name>
    <name type="common">CaMV</name>
    <dbReference type="NCBI Taxonomy" id="31556"/>
    <lineage>
        <taxon>Viruses</taxon>
        <taxon>Riboviria</taxon>
        <taxon>Pararnavirae</taxon>
        <taxon>Artverviricota</taxon>
        <taxon>Revtraviricetes</taxon>
        <taxon>Ortervirales</taxon>
        <taxon>Caulimoviridae</taxon>
        <taxon>Caulimovirus</taxon>
        <taxon>Caulimovirus tessellobrassicae</taxon>
    </lineage>
</organism>
<dbReference type="EMBL" id="M90542">
    <property type="protein sequence ID" value="AAA62372.1"/>
    <property type="molecule type" value="Genomic_DNA"/>
</dbReference>
<dbReference type="SMR" id="Q02966"/>
<dbReference type="Proteomes" id="UP000008440">
    <property type="component" value="Genome"/>
</dbReference>
<dbReference type="InterPro" id="IPR004917">
    <property type="entry name" value="Caulimo_AT"/>
</dbReference>
<dbReference type="Pfam" id="PF03233">
    <property type="entry name" value="Cauli_AT"/>
    <property type="match status" value="1"/>
</dbReference>
<organismHost>
    <name type="scientific">Arabidopsis thaliana</name>
    <name type="common">Mouse-ear cress</name>
    <dbReference type="NCBI Taxonomy" id="3702"/>
</organismHost>
<organismHost>
    <name type="scientific">Brassica</name>
    <dbReference type="NCBI Taxonomy" id="3705"/>
</organismHost>
<organismHost>
    <name type="scientific">Raphanus</name>
    <dbReference type="NCBI Taxonomy" id="3725"/>
</organismHost>
<accession>Q02966</accession>
<reference key="1">
    <citation type="journal article" date="1993" name="Gene">
        <title>The complete nucleotide sequence of cauliflower mosaic virus isolate BBC.</title>
        <authorList>
            <person name="Chenault K.D."/>
            <person name="Melcher U.K."/>
        </authorList>
    </citation>
    <scope>NUCLEOTIDE SEQUENCE [GENOMIC DNA]</scope>
</reference>
<name>VAT_CAMVE</name>
<sequence length="159" mass="17885">MRITGQPHVYKKDTIIRLKPLSLNSNNRSYVFSSSKGNIQNIINHLNNLNEIVGRSLLGIWKINSYFGLSKDPSESKSKNPSVFNTAKTIFKSGGVDYSSQLKEIKSLLEAQNTRIKNLEKAIQSLDNKIEPEPLTKKEVKELKESINSIKEGLKNIIG</sequence>